<comment type="function">
    <text evidence="1">Catalyzes the condensation of (S)-aspartate-beta-semialdehyde [(S)-ASA] and pyruvate to 4-hydroxy-tetrahydrodipicolinate (HTPA).</text>
</comment>
<comment type="catalytic activity">
    <reaction evidence="1">
        <text>L-aspartate 4-semialdehyde + pyruvate = (2S,4S)-4-hydroxy-2,3,4,5-tetrahydrodipicolinate + H2O + H(+)</text>
        <dbReference type="Rhea" id="RHEA:34171"/>
        <dbReference type="ChEBI" id="CHEBI:15361"/>
        <dbReference type="ChEBI" id="CHEBI:15377"/>
        <dbReference type="ChEBI" id="CHEBI:15378"/>
        <dbReference type="ChEBI" id="CHEBI:67139"/>
        <dbReference type="ChEBI" id="CHEBI:537519"/>
        <dbReference type="EC" id="4.3.3.7"/>
    </reaction>
</comment>
<comment type="pathway">
    <text evidence="1">Amino-acid biosynthesis; L-lysine biosynthesis via DAP pathway; (S)-tetrahydrodipicolinate from L-aspartate: step 3/4.</text>
</comment>
<comment type="subunit">
    <text evidence="1">Homotetramer; dimer of dimers.</text>
</comment>
<comment type="subcellular location">
    <subcellularLocation>
        <location evidence="1">Cytoplasm</location>
    </subcellularLocation>
</comment>
<comment type="similarity">
    <text evidence="1">Belongs to the DapA family.</text>
</comment>
<comment type="caution">
    <text evidence="2">Was originally thought to be a dihydrodipicolinate synthase (DHDPS), catalyzing the condensation of (S)-aspartate-beta-semialdehyde [(S)-ASA] and pyruvate to dihydrodipicolinate (DHDP). However, it was shown in E.coli that the product of the enzymatic reaction is not dihydrodipicolinate but in fact (4S)-4-hydroxy-2,3,4,5-tetrahydro-(2S)-dipicolinic acid (HTPA), and that the consecutive dehydration reaction leading to DHDP is not spontaneous but catalyzed by DapB.</text>
</comment>
<gene>
    <name evidence="1" type="primary">dapA</name>
    <name type="ordered locus">VC0395_A1738</name>
    <name type="ordered locus">VC395_2271</name>
</gene>
<protein>
    <recommendedName>
        <fullName evidence="1">4-hydroxy-tetrahydrodipicolinate synthase</fullName>
        <shortName evidence="1">HTPA synthase</shortName>
        <ecNumber evidence="1">4.3.3.7</ecNumber>
    </recommendedName>
</protein>
<sequence length="292" mass="31348">MFSGSIVALITPFTPDGEVDYISLKKLVDFHVDAGTDAIVSVGTTGESATLTVEEHVKVVAKTVEFAEGRLPIIAGTGANATHEAVTFSRLLNNTGIAGYLSVTPYYNKPTQEGLFLHYNAIAQETDIPVILYNVPGRTAVDMRPETVARLSEIKNIVALKDATGDLSRVAKHREMCKEGFVLLSGDDATGLEFVKLGGQGVISVTNNIAAADMAKMMHLALDGKFDEAASINQRLMTLHKNLFIESSPIPVKWAAHKMGLIANGDLRLPLTQLSEPARPIVAQALSEACIY</sequence>
<dbReference type="EC" id="4.3.3.7" evidence="1"/>
<dbReference type="EMBL" id="CP000627">
    <property type="protein sequence ID" value="ABQ20023.1"/>
    <property type="molecule type" value="Genomic_DNA"/>
</dbReference>
<dbReference type="EMBL" id="CP001235">
    <property type="protein sequence ID" value="ACP10263.1"/>
    <property type="molecule type" value="Genomic_DNA"/>
</dbReference>
<dbReference type="RefSeq" id="WP_000491215.1">
    <property type="nucleotide sequence ID" value="NZ_JAACZH010000001.1"/>
</dbReference>
<dbReference type="SMR" id="A5F699"/>
<dbReference type="KEGG" id="vco:VC0395_A1738"/>
<dbReference type="KEGG" id="vcr:VC395_2271"/>
<dbReference type="PATRIC" id="fig|345073.21.peg.2192"/>
<dbReference type="eggNOG" id="COG0329">
    <property type="taxonomic scope" value="Bacteria"/>
</dbReference>
<dbReference type="HOGENOM" id="CLU_049343_7_1_6"/>
<dbReference type="OrthoDB" id="9782828at2"/>
<dbReference type="BRENDA" id="4.3.3.7">
    <property type="organism ID" value="6626"/>
</dbReference>
<dbReference type="UniPathway" id="UPA00034">
    <property type="reaction ID" value="UER00017"/>
</dbReference>
<dbReference type="Proteomes" id="UP000000249">
    <property type="component" value="Chromosome 2"/>
</dbReference>
<dbReference type="GO" id="GO:0005829">
    <property type="term" value="C:cytosol"/>
    <property type="evidence" value="ECO:0007669"/>
    <property type="project" value="TreeGrafter"/>
</dbReference>
<dbReference type="GO" id="GO:0008840">
    <property type="term" value="F:4-hydroxy-tetrahydrodipicolinate synthase activity"/>
    <property type="evidence" value="ECO:0007669"/>
    <property type="project" value="UniProtKB-UniRule"/>
</dbReference>
<dbReference type="GO" id="GO:0019877">
    <property type="term" value="P:diaminopimelate biosynthetic process"/>
    <property type="evidence" value="ECO:0007669"/>
    <property type="project" value="UniProtKB-UniRule"/>
</dbReference>
<dbReference type="GO" id="GO:0009089">
    <property type="term" value="P:lysine biosynthetic process via diaminopimelate"/>
    <property type="evidence" value="ECO:0007669"/>
    <property type="project" value="UniProtKB-UniRule"/>
</dbReference>
<dbReference type="CDD" id="cd00950">
    <property type="entry name" value="DHDPS"/>
    <property type="match status" value="1"/>
</dbReference>
<dbReference type="FunFam" id="3.20.20.70:FF:000046">
    <property type="entry name" value="4-hydroxy-tetrahydrodipicolinate synthase"/>
    <property type="match status" value="1"/>
</dbReference>
<dbReference type="Gene3D" id="3.20.20.70">
    <property type="entry name" value="Aldolase class I"/>
    <property type="match status" value="1"/>
</dbReference>
<dbReference type="HAMAP" id="MF_00418">
    <property type="entry name" value="DapA"/>
    <property type="match status" value="1"/>
</dbReference>
<dbReference type="InterPro" id="IPR013785">
    <property type="entry name" value="Aldolase_TIM"/>
</dbReference>
<dbReference type="InterPro" id="IPR005263">
    <property type="entry name" value="DapA"/>
</dbReference>
<dbReference type="InterPro" id="IPR002220">
    <property type="entry name" value="DapA-like"/>
</dbReference>
<dbReference type="InterPro" id="IPR020625">
    <property type="entry name" value="Schiff_base-form_aldolases_AS"/>
</dbReference>
<dbReference type="InterPro" id="IPR020624">
    <property type="entry name" value="Schiff_base-form_aldolases_CS"/>
</dbReference>
<dbReference type="NCBIfam" id="TIGR00674">
    <property type="entry name" value="dapA"/>
    <property type="match status" value="1"/>
</dbReference>
<dbReference type="PANTHER" id="PTHR12128:SF66">
    <property type="entry name" value="4-HYDROXY-2-OXOGLUTARATE ALDOLASE, MITOCHONDRIAL"/>
    <property type="match status" value="1"/>
</dbReference>
<dbReference type="PANTHER" id="PTHR12128">
    <property type="entry name" value="DIHYDRODIPICOLINATE SYNTHASE"/>
    <property type="match status" value="1"/>
</dbReference>
<dbReference type="Pfam" id="PF00701">
    <property type="entry name" value="DHDPS"/>
    <property type="match status" value="1"/>
</dbReference>
<dbReference type="PIRSF" id="PIRSF001365">
    <property type="entry name" value="DHDPS"/>
    <property type="match status" value="1"/>
</dbReference>
<dbReference type="PRINTS" id="PR00146">
    <property type="entry name" value="DHPICSNTHASE"/>
</dbReference>
<dbReference type="SMART" id="SM01130">
    <property type="entry name" value="DHDPS"/>
    <property type="match status" value="1"/>
</dbReference>
<dbReference type="SUPFAM" id="SSF51569">
    <property type="entry name" value="Aldolase"/>
    <property type="match status" value="1"/>
</dbReference>
<dbReference type="PROSITE" id="PS00665">
    <property type="entry name" value="DHDPS_1"/>
    <property type="match status" value="1"/>
</dbReference>
<dbReference type="PROSITE" id="PS00666">
    <property type="entry name" value="DHDPS_2"/>
    <property type="match status" value="1"/>
</dbReference>
<evidence type="ECO:0000255" key="1">
    <source>
        <dbReference type="HAMAP-Rule" id="MF_00418"/>
    </source>
</evidence>
<evidence type="ECO:0000305" key="2"/>
<name>DAPA_VIBC3</name>
<proteinExistence type="inferred from homology"/>
<keyword id="KW-0028">Amino-acid biosynthesis</keyword>
<keyword id="KW-0963">Cytoplasm</keyword>
<keyword id="KW-0220">Diaminopimelate biosynthesis</keyword>
<keyword id="KW-0456">Lyase</keyword>
<keyword id="KW-0457">Lysine biosynthesis</keyword>
<keyword id="KW-0704">Schiff base</keyword>
<reference key="1">
    <citation type="submission" date="2007-03" db="EMBL/GenBank/DDBJ databases">
        <authorList>
            <person name="Heidelberg J."/>
        </authorList>
    </citation>
    <scope>NUCLEOTIDE SEQUENCE [LARGE SCALE GENOMIC DNA]</scope>
    <source>
        <strain>ATCC 39541 / Classical Ogawa 395 / O395</strain>
    </source>
</reference>
<reference key="2">
    <citation type="journal article" date="2008" name="PLoS ONE">
        <title>A recalibrated molecular clock and independent origins for the cholera pandemic clones.</title>
        <authorList>
            <person name="Feng L."/>
            <person name="Reeves P.R."/>
            <person name="Lan R."/>
            <person name="Ren Y."/>
            <person name="Gao C."/>
            <person name="Zhou Z."/>
            <person name="Ren Y."/>
            <person name="Cheng J."/>
            <person name="Wang W."/>
            <person name="Wang J."/>
            <person name="Qian W."/>
            <person name="Li D."/>
            <person name="Wang L."/>
        </authorList>
    </citation>
    <scope>NUCLEOTIDE SEQUENCE [LARGE SCALE GENOMIC DNA]</scope>
    <source>
        <strain>ATCC 39541 / Classical Ogawa 395 / O395</strain>
    </source>
</reference>
<organism>
    <name type="scientific">Vibrio cholerae serotype O1 (strain ATCC 39541 / Classical Ogawa 395 / O395)</name>
    <dbReference type="NCBI Taxonomy" id="345073"/>
    <lineage>
        <taxon>Bacteria</taxon>
        <taxon>Pseudomonadati</taxon>
        <taxon>Pseudomonadota</taxon>
        <taxon>Gammaproteobacteria</taxon>
        <taxon>Vibrionales</taxon>
        <taxon>Vibrionaceae</taxon>
        <taxon>Vibrio</taxon>
    </lineage>
</organism>
<feature type="chain" id="PRO_1000072295" description="4-hydroxy-tetrahydrodipicolinate synthase">
    <location>
        <begin position="1"/>
        <end position="292"/>
    </location>
</feature>
<feature type="active site" description="Proton donor/acceptor" evidence="1">
    <location>
        <position position="133"/>
    </location>
</feature>
<feature type="active site" description="Schiff-base intermediate with substrate" evidence="1">
    <location>
        <position position="161"/>
    </location>
</feature>
<feature type="binding site" evidence="1">
    <location>
        <position position="45"/>
    </location>
    <ligand>
        <name>pyruvate</name>
        <dbReference type="ChEBI" id="CHEBI:15361"/>
    </ligand>
</feature>
<feature type="binding site" evidence="1">
    <location>
        <position position="203"/>
    </location>
    <ligand>
        <name>pyruvate</name>
        <dbReference type="ChEBI" id="CHEBI:15361"/>
    </ligand>
</feature>
<feature type="site" description="Part of a proton relay during catalysis" evidence="1">
    <location>
        <position position="44"/>
    </location>
</feature>
<feature type="site" description="Part of a proton relay during catalysis" evidence="1">
    <location>
        <position position="107"/>
    </location>
</feature>
<accession>A5F699</accession>
<accession>C3M2Y9</accession>